<accession>A7ZC11</accession>
<protein>
    <recommendedName>
        <fullName evidence="1">Large ribosomal subunit protein bL27</fullName>
    </recommendedName>
    <alternativeName>
        <fullName evidence="2">50S ribosomal protein L27</fullName>
    </alternativeName>
</protein>
<comment type="similarity">
    <text evidence="1">Belongs to the bacterial ribosomal protein bL27 family.</text>
</comment>
<evidence type="ECO:0000255" key="1">
    <source>
        <dbReference type="HAMAP-Rule" id="MF_00539"/>
    </source>
</evidence>
<evidence type="ECO:0000305" key="2"/>
<name>RL27_CAMC1</name>
<gene>
    <name evidence="1" type="primary">rpmA</name>
    <name type="ordered locus">Ccon26_04160</name>
    <name type="ORF">CCC13826_0996</name>
</gene>
<feature type="chain" id="PRO_1000017439" description="Large ribosomal subunit protein bL27">
    <location>
        <begin position="1"/>
        <end position="85"/>
    </location>
</feature>
<proteinExistence type="inferred from homology"/>
<reference key="1">
    <citation type="submission" date="2007-10" db="EMBL/GenBank/DDBJ databases">
        <title>Genome sequence of Campylobacter concisus 13826 isolated from human feces.</title>
        <authorList>
            <person name="Fouts D.E."/>
            <person name="Mongodin E.F."/>
            <person name="Puiu D."/>
            <person name="Sebastian Y."/>
            <person name="Miller W.G."/>
            <person name="Mandrell R.E."/>
            <person name="On S."/>
            <person name="Nelson K.E."/>
        </authorList>
    </citation>
    <scope>NUCLEOTIDE SEQUENCE [LARGE SCALE GENOMIC DNA]</scope>
    <source>
        <strain>13826</strain>
    </source>
</reference>
<organism>
    <name type="scientific">Campylobacter concisus (strain 13826)</name>
    <dbReference type="NCBI Taxonomy" id="360104"/>
    <lineage>
        <taxon>Bacteria</taxon>
        <taxon>Pseudomonadati</taxon>
        <taxon>Campylobacterota</taxon>
        <taxon>Epsilonproteobacteria</taxon>
        <taxon>Campylobacterales</taxon>
        <taxon>Campylobacteraceae</taxon>
        <taxon>Campylobacter</taxon>
    </lineage>
</organism>
<keyword id="KW-0687">Ribonucleoprotein</keyword>
<keyword id="KW-0689">Ribosomal protein</keyword>
<sequence length="85" mass="9308">MAHKKGQGSTQNNRDSIGRRLGVKKFGGEFVRAGNIIIRQRGTATHAGNNVGLGKDHTIFALVDGFVKFERLDKNRKKVSVYPAA</sequence>
<dbReference type="EMBL" id="CP000792">
    <property type="protein sequence ID" value="EAT98202.1"/>
    <property type="molecule type" value="Genomic_DNA"/>
</dbReference>
<dbReference type="RefSeq" id="WP_002942569.1">
    <property type="nucleotide sequence ID" value="NC_009802.2"/>
</dbReference>
<dbReference type="SMR" id="A7ZC11"/>
<dbReference type="STRING" id="360104.CCC13826_0996"/>
<dbReference type="GeneID" id="28662112"/>
<dbReference type="KEGG" id="cco:CCC13826_0996"/>
<dbReference type="eggNOG" id="COG0211">
    <property type="taxonomic scope" value="Bacteria"/>
</dbReference>
<dbReference type="HOGENOM" id="CLU_095424_4_0_7"/>
<dbReference type="OrthoDB" id="9803474at2"/>
<dbReference type="Proteomes" id="UP000001121">
    <property type="component" value="Chromosome"/>
</dbReference>
<dbReference type="GO" id="GO:0022625">
    <property type="term" value="C:cytosolic large ribosomal subunit"/>
    <property type="evidence" value="ECO:0007669"/>
    <property type="project" value="TreeGrafter"/>
</dbReference>
<dbReference type="GO" id="GO:0003735">
    <property type="term" value="F:structural constituent of ribosome"/>
    <property type="evidence" value="ECO:0007669"/>
    <property type="project" value="InterPro"/>
</dbReference>
<dbReference type="GO" id="GO:0006412">
    <property type="term" value="P:translation"/>
    <property type="evidence" value="ECO:0007669"/>
    <property type="project" value="UniProtKB-UniRule"/>
</dbReference>
<dbReference type="FunFam" id="2.40.50.100:FF:000004">
    <property type="entry name" value="50S ribosomal protein L27"/>
    <property type="match status" value="1"/>
</dbReference>
<dbReference type="Gene3D" id="2.40.50.100">
    <property type="match status" value="1"/>
</dbReference>
<dbReference type="HAMAP" id="MF_00539">
    <property type="entry name" value="Ribosomal_bL27"/>
    <property type="match status" value="1"/>
</dbReference>
<dbReference type="InterPro" id="IPR001684">
    <property type="entry name" value="Ribosomal_bL27"/>
</dbReference>
<dbReference type="InterPro" id="IPR018261">
    <property type="entry name" value="Ribosomal_bL27_CS"/>
</dbReference>
<dbReference type="NCBIfam" id="TIGR00062">
    <property type="entry name" value="L27"/>
    <property type="match status" value="1"/>
</dbReference>
<dbReference type="PANTHER" id="PTHR15893:SF0">
    <property type="entry name" value="LARGE RIBOSOMAL SUBUNIT PROTEIN BL27M"/>
    <property type="match status" value="1"/>
</dbReference>
<dbReference type="PANTHER" id="PTHR15893">
    <property type="entry name" value="RIBOSOMAL PROTEIN L27"/>
    <property type="match status" value="1"/>
</dbReference>
<dbReference type="Pfam" id="PF01016">
    <property type="entry name" value="Ribosomal_L27"/>
    <property type="match status" value="1"/>
</dbReference>
<dbReference type="PRINTS" id="PR00063">
    <property type="entry name" value="RIBOSOMALL27"/>
</dbReference>
<dbReference type="SUPFAM" id="SSF110324">
    <property type="entry name" value="Ribosomal L27 protein-like"/>
    <property type="match status" value="1"/>
</dbReference>
<dbReference type="PROSITE" id="PS00831">
    <property type="entry name" value="RIBOSOMAL_L27"/>
    <property type="match status" value="1"/>
</dbReference>